<feature type="chain" id="PRO_0000423154" description="Protein VP1" evidence="1">
    <location>
        <begin position="1"/>
        <end position="314"/>
    </location>
</feature>
<feature type="chain" id="PRO_0000423155" description="Protein VP4" evidence="1">
    <location>
        <begin position="315"/>
        <end position="396"/>
    </location>
</feature>
<feature type="chain" id="PRO_0000423156" description="Protein VP2" evidence="1">
    <location>
        <begin position="397"/>
        <end position="696"/>
    </location>
</feature>
<feature type="chain" id="PRO_0000423157" description="Protein VP3" evidence="1">
    <location>
        <begin position="697"/>
        <end position="904"/>
    </location>
</feature>
<feature type="region of interest" description="Disordered" evidence="2">
    <location>
        <begin position="1"/>
        <end position="27"/>
    </location>
</feature>
<feature type="region of interest" description="Disordered" evidence="2">
    <location>
        <begin position="35"/>
        <end position="54"/>
    </location>
</feature>
<feature type="region of interest" description="Disordered" evidence="2">
    <location>
        <begin position="320"/>
        <end position="348"/>
    </location>
</feature>
<feature type="compositionally biased region" description="Polar residues" evidence="2">
    <location>
        <begin position="39"/>
        <end position="53"/>
    </location>
</feature>
<feature type="compositionally biased region" description="Basic and acidic residues" evidence="2">
    <location>
        <begin position="329"/>
        <end position="343"/>
    </location>
</feature>
<protein>
    <recommendedName>
        <fullName>Structural polyprotein</fullName>
    </recommendedName>
    <component>
        <recommendedName>
            <fullName>Protein VP1</fullName>
        </recommendedName>
        <alternativeName>
            <fullName>Virion protein 2</fullName>
        </alternativeName>
    </component>
    <component>
        <recommendedName>
            <fullName>Protein VP4</fullName>
        </recommendedName>
        <alternativeName>
            <fullName>Virion protein 4</fullName>
        </alternativeName>
    </component>
    <component>
        <recommendedName>
            <fullName>Protein VP2</fullName>
        </recommendedName>
        <alternativeName>
            <fullName>Virion protein 3</fullName>
        </alternativeName>
    </component>
    <component>
        <recommendedName>
            <fullName>Protein VP3</fullName>
        </recommendedName>
        <alternativeName>
            <fullName>Virion protein 1</fullName>
        </alternativeName>
    </component>
</protein>
<organismHost>
    <name type="scientific">Apis mellifera</name>
    <name type="common">Honeybee</name>
    <dbReference type="NCBI Taxonomy" id="7460"/>
</organismHost>
<comment type="function">
    <text>Structural polyprotein: precursor of all the viral capsid proteins.</text>
</comment>
<comment type="function">
    <molecule>Protein VP1</molecule>
    <text>Forms, together with protein VP2 and protein VP3, an icosahedral capsid protecting the viral RNA genome. The icosahedral capsid has a pseudo-T=3 symmetry with a diameter of approximately 300 Angstroms, and is composed of 60 copies of each capsid proteins.</text>
</comment>
<comment type="function">
    <molecule>Protein VP2</molecule>
    <text>Forms, together with protein VP1 and protein VP3, an icosahedral capsid protecting the viral RNA genome. The icosahedral capsid has a pseudo-T=3 symmetry with a diameter of approximately 300 Angstroms, and is composed of 60 copies of each capsid proteins.</text>
</comment>
<comment type="function">
    <molecule>Protein VP3</molecule>
    <text>Forms, together with protein VP1 and protein VP2, an icosahedral capsid protecting the viral RNA genome. The icosahedral capsid has a pseudo-T=3 symmetry with a diameter of approximately 300 Angstroms, and is composed of 60 copies of each capsid proteins.</text>
</comment>
<comment type="subcellular location">
    <molecule>Protein VP1</molecule>
    <subcellularLocation>
        <location>Virion</location>
    </subcellularLocation>
    <subcellularLocation>
        <location evidence="4">Host cytoplasm</location>
    </subcellularLocation>
</comment>
<comment type="subcellular location">
    <molecule>Protein VP2</molecule>
    <subcellularLocation>
        <location>Virion</location>
    </subcellularLocation>
    <subcellularLocation>
        <location evidence="4">Host cytoplasm</location>
    </subcellularLocation>
</comment>
<comment type="subcellular location">
    <molecule>Protein VP3</molecule>
    <subcellularLocation>
        <location>Virion</location>
    </subcellularLocation>
    <subcellularLocation>
        <location evidence="4">Host cytoplasm</location>
    </subcellularLocation>
</comment>
<comment type="PTM">
    <text evidence="3">Specific enzymatic cleavages in vivo yield mature proteins.</text>
</comment>
<comment type="similarity">
    <text evidence="4">Belongs to the picornaviruses polyprotein family.</text>
</comment>
<comment type="caution">
    <text evidence="4">Translation initiates on an Ala codon through an unusual Internal Ribosome Entry Site (IRES).</text>
</comment>
<comment type="sequence caution" evidence="4">
    <conflict type="erroneous initiation">
        <sequence resource="EMBL-CDS" id="AAG13119"/>
    </conflict>
    <text>Extended N-terminus.</text>
</comment>
<reference key="1">
    <citation type="journal article" date="2000" name="Virology">
        <title>Analysis of the complete genome sequence of acute bee paralysis virus shows that it belongs to the novel group of insect-infecting RNA viruses.</title>
        <authorList>
            <person name="Govan V.A."/>
            <person name="Leat N."/>
            <person name="Allsopp M."/>
            <person name="Davison S."/>
        </authorList>
    </citation>
    <scope>NUCLEOTIDE SEQUENCE [GENOMIC RNA]</scope>
</reference>
<reference key="2">
    <citation type="journal article" date="2012" name="Arch. Virol.">
        <title>Infection of honey bees with acute bee paralysis virus does not trigger humoral or cellular immune responses.</title>
        <authorList>
            <person name="Azzami K."/>
            <person name="Ritter W."/>
            <person name="Tautz J."/>
            <person name="Beier H."/>
        </authorList>
    </citation>
    <scope>PROTEOLYTIC PROCESSING OF POLYPROTEIN</scope>
</reference>
<dbReference type="EMBL" id="AF150629">
    <property type="protein sequence ID" value="AAG13119.1"/>
    <property type="status" value="ALT_INIT"/>
    <property type="molecule type" value="Genomic_RNA"/>
</dbReference>
<dbReference type="RefSeq" id="NP_066242.1">
    <property type="nucleotide sequence ID" value="NC_002548.1"/>
</dbReference>
<dbReference type="SMR" id="Q9DSN8"/>
<dbReference type="KEGG" id="vg:911836"/>
<dbReference type="Proteomes" id="UP000006040">
    <property type="component" value="Segment"/>
</dbReference>
<dbReference type="GO" id="GO:0030430">
    <property type="term" value="C:host cell cytoplasm"/>
    <property type="evidence" value="ECO:0007669"/>
    <property type="project" value="UniProtKB-SubCell"/>
</dbReference>
<dbReference type="GO" id="GO:0019028">
    <property type="term" value="C:viral capsid"/>
    <property type="evidence" value="ECO:0007669"/>
    <property type="project" value="UniProtKB-KW"/>
</dbReference>
<dbReference type="GO" id="GO:0005198">
    <property type="term" value="F:structural molecule activity"/>
    <property type="evidence" value="ECO:0007669"/>
    <property type="project" value="InterPro"/>
</dbReference>
<dbReference type="CDD" id="cd00205">
    <property type="entry name" value="rhv_like"/>
    <property type="match status" value="2"/>
</dbReference>
<dbReference type="Gene3D" id="2.60.120.20">
    <property type="match status" value="3"/>
</dbReference>
<dbReference type="InterPro" id="IPR014872">
    <property type="entry name" value="Dicistrovirus_capsid-polyPr_C"/>
</dbReference>
<dbReference type="InterPro" id="IPR001676">
    <property type="entry name" value="Picornavirus_capsid"/>
</dbReference>
<dbReference type="InterPro" id="IPR033703">
    <property type="entry name" value="Rhv-like"/>
</dbReference>
<dbReference type="InterPro" id="IPR029053">
    <property type="entry name" value="Viral_coat"/>
</dbReference>
<dbReference type="InterPro" id="IPR024343">
    <property type="entry name" value="VP4_dicistrovir"/>
</dbReference>
<dbReference type="Pfam" id="PF08762">
    <property type="entry name" value="CRPV_capsid"/>
    <property type="match status" value="1"/>
</dbReference>
<dbReference type="Pfam" id="PF11492">
    <property type="entry name" value="Dicistro_VP4"/>
    <property type="match status" value="1"/>
</dbReference>
<dbReference type="Pfam" id="PF00073">
    <property type="entry name" value="Rhv"/>
    <property type="match status" value="1"/>
</dbReference>
<dbReference type="SUPFAM" id="SSF88633">
    <property type="entry name" value="Positive stranded ssRNA viruses"/>
    <property type="match status" value="3"/>
</dbReference>
<evidence type="ECO:0000255" key="1"/>
<evidence type="ECO:0000256" key="2">
    <source>
        <dbReference type="SAM" id="MobiDB-lite"/>
    </source>
</evidence>
<evidence type="ECO:0000269" key="3">
    <source>
    </source>
</evidence>
<evidence type="ECO:0000305" key="4"/>
<gene>
    <name type="ORF">ORF2</name>
</gene>
<accession>Q9DSN8</accession>
<proteinExistence type="evidence at protein level"/>
<organism>
    <name type="scientific">Acute bee paralysis virus (strain Rothamsted)</name>
    <name type="common">ABPV</name>
    <dbReference type="NCBI Taxonomy" id="1217067"/>
    <lineage>
        <taxon>Viruses</taxon>
        <taxon>Riboviria</taxon>
        <taxon>Orthornavirae</taxon>
        <taxon>Pisuviricota</taxon>
        <taxon>Pisoniviricetes</taxon>
        <taxon>Picornavirales</taxon>
        <taxon>Dicistroviridae</taxon>
        <taxon>Aparavirus</taxon>
        <taxon>Aparavirus apisacutum</taxon>
    </lineage>
</organism>
<keyword id="KW-0167">Capsid protein</keyword>
<keyword id="KW-1035">Host cytoplasm</keyword>
<keyword id="KW-1185">Reference proteome</keyword>
<keyword id="KW-0946">Virion</keyword>
<name>POLS_ABPVR</name>
<sequence>ADQETNTSNVHNTQLASTSEENSVETEQITTFHDVETPNRINTPMAQDTSSARSMDDTHSIIQFLQRPVLIDHIEVIAGSTADDNKPLNRYVLNRQNPQPFVKSWTLPSVVLSAGGKGQKLANFKYLRCDVKVKIVLNANPFIAGRLYLAYSPYDDRVDPARSILNTSRAGVTGYPGIEIDFQLDNSVEMTIPYASFQEAYDLVTGTEDFVKLYLFTITPILSPTSTSASSKVDLSVYMWLDNISLVIPTYRVNTSIVPNVGTVVQTVQNMTTRDSETIRKAMVALRKNNKSTYDYIVQALSSAVPEVKNVTMQINSKKNNSNKMATPVKEKTKNIPKPKTENPKIGPISELATGVNKVANGIERIPVIGEMAKPVTSTIKWVADKIGSVAAIFGWSKPRNLEQVNLYQNVPGWGYSLYKGIDNSVPLAFDPNNELGDLRDVFPSGVDEMAIGYVCGNPAVKHVLSWNTTDKVQAPISNGDDWGGVIPVGMPCYSKIIRTTENDTTRTNTEIMDPAPCEYVCNMFSYWRATMCYRIAIVKTAFHTGRLGIFFGPGKIPITTTKDNISPDLTQLDGIKAPSDNNYKYILDLTNDTEITIRVPFVSNKMFMKSTGIYGGNSENNWDFSESFTGFLCIRPITKFMCPETVSNNVSIVVWKWAEDVVVVEPKPLLSGPTQVFQPPVTSADSINTIDASMQINLANKADENVVTFFDSDDAEERNMEALLKGSGEQIMNLRSLLRTFRTISENWNLPPNTKTAITDLTDVADKEGRDYMSYLSYIYRFYRGGRRYKFFNTTALKQSQTCYVRSFLIPRYYTADNTNNDGPSHITYPVLNPVHEVEVPYYCQYRKLPVASTTDKGYDASLMYYSNVGTNQIVARAGNDDFTFGWLIGTPQTQGITRTETK</sequence>